<protein>
    <recommendedName>
        <fullName>Calumenin-B</fullName>
    </recommendedName>
</protein>
<sequence length="315" mass="37335">MEQWPLLFVVALCILQSSSKPMEKKDRVHHDAPLSNKDHDDEENFDYDHEAFLGQEEAKTFDQLTPEESKERLGKIVEKIDEDHDGFVTADEMKRWIKHAQRRWIYEDVDRQWQAHDLNSDSFVSWEEYKDATYGYILDEADPEDGFNYRQMMTRDERRFKMADQDGDLRANKEEFTAFLHPEEFDYMKDIVVLETMEDIDKNGDGLIDLNEYIGDMYSQNGDSSEPEWVKTEREQFTEFRDKNKDGRMDKDETRDWILPADYDHAEAEAKHLLYESDADKDGRLTKQEIVDKYDLFVGSQATDFGDALVRHDEF</sequence>
<comment type="function">
    <text evidence="1">Involved in regulation of vitamin K-dependent carboxylation of multiple N-terminal glutamate residues. Seems to inhibit gamma-carboxylase ggcx. Binds 7 calcium ions with a low affinity (By similarity).</text>
</comment>
<comment type="subunit">
    <text evidence="1">Interacts with ggcx.</text>
</comment>
<comment type="subcellular location">
    <subcellularLocation>
        <location evidence="2">Endoplasmic reticulum membrane</location>
    </subcellularLocation>
    <subcellularLocation>
        <location evidence="2">Golgi apparatus</location>
    </subcellularLocation>
    <subcellularLocation>
        <location evidence="2">Secreted</location>
    </subcellularLocation>
    <subcellularLocation>
        <location evidence="2">Melanosome</location>
    </subcellularLocation>
    <subcellularLocation>
        <location evidence="2">Sarcoplasmic reticulum lumen</location>
    </subcellularLocation>
</comment>
<comment type="similarity">
    <text evidence="5">Belongs to the CREC family.</text>
</comment>
<keyword id="KW-0106">Calcium</keyword>
<keyword id="KW-0256">Endoplasmic reticulum</keyword>
<keyword id="KW-0333">Golgi apparatus</keyword>
<keyword id="KW-0472">Membrane</keyword>
<keyword id="KW-0479">Metal-binding</keyword>
<keyword id="KW-1185">Reference proteome</keyword>
<keyword id="KW-0677">Repeat</keyword>
<keyword id="KW-0703">Sarcoplasmic reticulum</keyword>
<keyword id="KW-0964">Secreted</keyword>
<keyword id="KW-0732">Signal</keyword>
<reference key="1">
    <citation type="submission" date="2003-07" db="EMBL/GenBank/DDBJ databases">
        <authorList>
            <consortium name="NIH - Zebrafish Gene Collection (ZGC) project"/>
        </authorList>
    </citation>
    <scope>NUCLEOTIDE SEQUENCE [LARGE SCALE MRNA]</scope>
    <source>
        <strain>AB</strain>
    </source>
</reference>
<dbReference type="EMBL" id="BC055227">
    <property type="protein sequence ID" value="AAH55227.1"/>
    <property type="molecule type" value="mRNA"/>
</dbReference>
<dbReference type="RefSeq" id="NP_957376.1">
    <property type="nucleotide sequence ID" value="NM_201082.1"/>
</dbReference>
<dbReference type="SMR" id="Q7SXV9"/>
<dbReference type="FunCoup" id="Q7SXV9">
    <property type="interactions" value="1946"/>
</dbReference>
<dbReference type="STRING" id="7955.ENSDARP00000025396"/>
<dbReference type="PaxDb" id="7955-ENSDARP00000106302"/>
<dbReference type="GeneID" id="394057"/>
<dbReference type="KEGG" id="dre:394057"/>
<dbReference type="AGR" id="ZFIN:ZDB-GENE-040426-1251"/>
<dbReference type="CTD" id="394057"/>
<dbReference type="ZFIN" id="ZDB-GENE-040426-1251">
    <property type="gene designation" value="calub"/>
</dbReference>
<dbReference type="eggNOG" id="KOG4223">
    <property type="taxonomic scope" value="Eukaryota"/>
</dbReference>
<dbReference type="InParanoid" id="Q7SXV9"/>
<dbReference type="OrthoDB" id="293868at2759"/>
<dbReference type="PhylomeDB" id="Q7SXV9"/>
<dbReference type="PRO" id="PR:Q7SXV9"/>
<dbReference type="Proteomes" id="UP000000437">
    <property type="component" value="Chromosome 18"/>
</dbReference>
<dbReference type="GO" id="GO:0005783">
    <property type="term" value="C:endoplasmic reticulum"/>
    <property type="evidence" value="ECO:0000318"/>
    <property type="project" value="GO_Central"/>
</dbReference>
<dbReference type="GO" id="GO:0005789">
    <property type="term" value="C:endoplasmic reticulum membrane"/>
    <property type="evidence" value="ECO:0000250"/>
    <property type="project" value="UniProtKB"/>
</dbReference>
<dbReference type="GO" id="GO:0005576">
    <property type="term" value="C:extracellular region"/>
    <property type="evidence" value="ECO:0000250"/>
    <property type="project" value="UniProtKB"/>
</dbReference>
<dbReference type="GO" id="GO:0005794">
    <property type="term" value="C:Golgi apparatus"/>
    <property type="evidence" value="ECO:0000250"/>
    <property type="project" value="UniProtKB"/>
</dbReference>
<dbReference type="GO" id="GO:0042470">
    <property type="term" value="C:melanosome"/>
    <property type="evidence" value="ECO:0007669"/>
    <property type="project" value="UniProtKB-SubCell"/>
</dbReference>
<dbReference type="GO" id="GO:0033018">
    <property type="term" value="C:sarcoplasmic reticulum lumen"/>
    <property type="evidence" value="ECO:0007669"/>
    <property type="project" value="UniProtKB-SubCell"/>
</dbReference>
<dbReference type="GO" id="GO:0005509">
    <property type="term" value="F:calcium ion binding"/>
    <property type="evidence" value="ECO:0000318"/>
    <property type="project" value="GO_Central"/>
</dbReference>
<dbReference type="FunFam" id="1.10.238.10:FF:000090">
    <property type="entry name" value="calumenin isoform X2"/>
    <property type="match status" value="1"/>
</dbReference>
<dbReference type="FunFam" id="1.10.238.10:FF:000109">
    <property type="entry name" value="calumenin isoform X2"/>
    <property type="match status" value="1"/>
</dbReference>
<dbReference type="FunFam" id="1.10.238.10:FF:000110">
    <property type="entry name" value="calumenin isoform X2"/>
    <property type="match status" value="1"/>
</dbReference>
<dbReference type="Gene3D" id="1.10.238.10">
    <property type="entry name" value="EF-hand"/>
    <property type="match status" value="2"/>
</dbReference>
<dbReference type="InterPro" id="IPR011992">
    <property type="entry name" value="EF-hand-dom_pair"/>
</dbReference>
<dbReference type="InterPro" id="IPR018247">
    <property type="entry name" value="EF_Hand_1_Ca_BS"/>
</dbReference>
<dbReference type="InterPro" id="IPR002048">
    <property type="entry name" value="EF_hand_dom"/>
</dbReference>
<dbReference type="PANTHER" id="PTHR10827:SF87">
    <property type="entry name" value="CALUMENIN-B"/>
    <property type="match status" value="1"/>
</dbReference>
<dbReference type="PANTHER" id="PTHR10827">
    <property type="entry name" value="RETICULOCALBIN"/>
    <property type="match status" value="1"/>
</dbReference>
<dbReference type="Pfam" id="PF13202">
    <property type="entry name" value="EF-hand_5"/>
    <property type="match status" value="1"/>
</dbReference>
<dbReference type="Pfam" id="PF13499">
    <property type="entry name" value="EF-hand_7"/>
    <property type="match status" value="1"/>
</dbReference>
<dbReference type="SMART" id="SM00054">
    <property type="entry name" value="EFh"/>
    <property type="match status" value="4"/>
</dbReference>
<dbReference type="SUPFAM" id="SSF47473">
    <property type="entry name" value="EF-hand"/>
    <property type="match status" value="2"/>
</dbReference>
<dbReference type="PROSITE" id="PS00018">
    <property type="entry name" value="EF_HAND_1"/>
    <property type="match status" value="3"/>
</dbReference>
<dbReference type="PROSITE" id="PS50222">
    <property type="entry name" value="EF_HAND_2"/>
    <property type="match status" value="6"/>
</dbReference>
<proteinExistence type="evidence at transcript level"/>
<gene>
    <name type="primary">calub</name>
</gene>
<organism>
    <name type="scientific">Danio rerio</name>
    <name type="common">Zebrafish</name>
    <name type="synonym">Brachydanio rerio</name>
    <dbReference type="NCBI Taxonomy" id="7955"/>
    <lineage>
        <taxon>Eukaryota</taxon>
        <taxon>Metazoa</taxon>
        <taxon>Chordata</taxon>
        <taxon>Craniata</taxon>
        <taxon>Vertebrata</taxon>
        <taxon>Euteleostomi</taxon>
        <taxon>Actinopterygii</taxon>
        <taxon>Neopterygii</taxon>
        <taxon>Teleostei</taxon>
        <taxon>Ostariophysi</taxon>
        <taxon>Cypriniformes</taxon>
        <taxon>Danionidae</taxon>
        <taxon>Danioninae</taxon>
        <taxon>Danio</taxon>
    </lineage>
</organism>
<feature type="signal peptide" evidence="1">
    <location>
        <begin position="1"/>
        <end position="19"/>
    </location>
</feature>
<feature type="chain" id="PRO_0000364194" description="Calumenin-B">
    <location>
        <begin position="20"/>
        <end position="315"/>
    </location>
</feature>
<feature type="domain" description="EF-hand 1" evidence="3">
    <location>
        <begin position="68"/>
        <end position="103"/>
    </location>
</feature>
<feature type="domain" description="EF-hand 2" evidence="3">
    <location>
        <begin position="104"/>
        <end position="139"/>
    </location>
</feature>
<feature type="domain" description="EF-hand 3" evidence="3">
    <location>
        <begin position="151"/>
        <end position="186"/>
    </location>
</feature>
<feature type="domain" description="EF-hand 4" evidence="3">
    <location>
        <begin position="188"/>
        <end position="223"/>
    </location>
</feature>
<feature type="domain" description="EF-hand 5" evidence="3">
    <location>
        <begin position="229"/>
        <end position="264"/>
    </location>
</feature>
<feature type="domain" description="EF-hand 6" evidence="3">
    <location>
        <begin position="265"/>
        <end position="300"/>
    </location>
</feature>
<feature type="region of interest" description="Disordered" evidence="4">
    <location>
        <begin position="22"/>
        <end position="42"/>
    </location>
</feature>
<feature type="short sequence motif" description="Prevents secretion from ER" evidence="1">
    <location>
        <begin position="312"/>
        <end position="315"/>
    </location>
</feature>
<feature type="compositionally biased region" description="Basic and acidic residues" evidence="4">
    <location>
        <begin position="22"/>
        <end position="39"/>
    </location>
</feature>
<feature type="binding site" evidence="3">
    <location>
        <position position="81"/>
    </location>
    <ligand>
        <name>Ca(2+)</name>
        <dbReference type="ChEBI" id="CHEBI:29108"/>
        <label>1</label>
    </ligand>
</feature>
<feature type="binding site" evidence="3">
    <location>
        <position position="83"/>
    </location>
    <ligand>
        <name>Ca(2+)</name>
        <dbReference type="ChEBI" id="CHEBI:29108"/>
        <label>1</label>
    </ligand>
</feature>
<feature type="binding site" evidence="3">
    <location>
        <position position="85"/>
    </location>
    <ligand>
        <name>Ca(2+)</name>
        <dbReference type="ChEBI" id="CHEBI:29108"/>
        <label>1</label>
    </ligand>
</feature>
<feature type="binding site" evidence="3">
    <location>
        <position position="92"/>
    </location>
    <ligand>
        <name>Ca(2+)</name>
        <dbReference type="ChEBI" id="CHEBI:29108"/>
        <label>1</label>
    </ligand>
</feature>
<feature type="binding site" evidence="5">
    <location>
        <position position="117"/>
    </location>
    <ligand>
        <name>Ca(2+)</name>
        <dbReference type="ChEBI" id="CHEBI:29108"/>
        <label>2</label>
    </ligand>
</feature>
<feature type="binding site" evidence="5">
    <location>
        <position position="119"/>
    </location>
    <ligand>
        <name>Ca(2+)</name>
        <dbReference type="ChEBI" id="CHEBI:29108"/>
        <label>2</label>
    </ligand>
</feature>
<feature type="binding site" evidence="5">
    <location>
        <position position="121"/>
    </location>
    <ligand>
        <name>Ca(2+)</name>
        <dbReference type="ChEBI" id="CHEBI:29108"/>
        <label>2</label>
    </ligand>
</feature>
<feature type="binding site" evidence="5">
    <location>
        <position position="128"/>
    </location>
    <ligand>
        <name>Ca(2+)</name>
        <dbReference type="ChEBI" id="CHEBI:29108"/>
        <label>2</label>
    </ligand>
</feature>
<feature type="binding site" evidence="5">
    <location>
        <position position="164"/>
    </location>
    <ligand>
        <name>Ca(2+)</name>
        <dbReference type="ChEBI" id="CHEBI:29108"/>
        <label>3</label>
    </ligand>
</feature>
<feature type="binding site" evidence="5">
    <location>
        <position position="166"/>
    </location>
    <ligand>
        <name>Ca(2+)</name>
        <dbReference type="ChEBI" id="CHEBI:29108"/>
        <label>3</label>
    </ligand>
</feature>
<feature type="binding site" evidence="5">
    <location>
        <position position="168"/>
    </location>
    <ligand>
        <name>Ca(2+)</name>
        <dbReference type="ChEBI" id="CHEBI:29108"/>
        <label>3</label>
    </ligand>
</feature>
<feature type="binding site" evidence="5">
    <location>
        <position position="170"/>
    </location>
    <ligand>
        <name>Ca(2+)</name>
        <dbReference type="ChEBI" id="CHEBI:29108"/>
        <label>3</label>
    </ligand>
</feature>
<feature type="binding site" evidence="5">
    <location>
        <position position="175"/>
    </location>
    <ligand>
        <name>Ca(2+)</name>
        <dbReference type="ChEBI" id="CHEBI:29108"/>
        <label>3</label>
    </ligand>
</feature>
<feature type="binding site" evidence="3">
    <location>
        <position position="201"/>
    </location>
    <ligand>
        <name>Ca(2+)</name>
        <dbReference type="ChEBI" id="CHEBI:29108"/>
        <label>4</label>
    </ligand>
</feature>
<feature type="binding site" evidence="3">
    <location>
        <position position="203"/>
    </location>
    <ligand>
        <name>Ca(2+)</name>
        <dbReference type="ChEBI" id="CHEBI:29108"/>
        <label>4</label>
    </ligand>
</feature>
<feature type="binding site" evidence="3">
    <location>
        <position position="205"/>
    </location>
    <ligand>
        <name>Ca(2+)</name>
        <dbReference type="ChEBI" id="CHEBI:29108"/>
        <label>4</label>
    </ligand>
</feature>
<feature type="binding site" evidence="3">
    <location>
        <position position="212"/>
    </location>
    <ligand>
        <name>Ca(2+)</name>
        <dbReference type="ChEBI" id="CHEBI:29108"/>
        <label>4</label>
    </ligand>
</feature>
<feature type="binding site" evidence="5">
    <location>
        <position position="242"/>
    </location>
    <ligand>
        <name>Ca(2+)</name>
        <dbReference type="ChEBI" id="CHEBI:29108"/>
        <label>5</label>
    </ligand>
</feature>
<feature type="binding site" evidence="5">
    <location>
        <position position="244"/>
    </location>
    <ligand>
        <name>Ca(2+)</name>
        <dbReference type="ChEBI" id="CHEBI:29108"/>
        <label>5</label>
    </ligand>
</feature>
<feature type="binding site" evidence="5">
    <location>
        <position position="246"/>
    </location>
    <ligand>
        <name>Ca(2+)</name>
        <dbReference type="ChEBI" id="CHEBI:29108"/>
        <label>5</label>
    </ligand>
</feature>
<feature type="binding site" evidence="5">
    <location>
        <position position="248"/>
    </location>
    <ligand>
        <name>Ca(2+)</name>
        <dbReference type="ChEBI" id="CHEBI:29108"/>
        <label>5</label>
    </ligand>
</feature>
<feature type="binding site" evidence="5">
    <location>
        <position position="253"/>
    </location>
    <ligand>
        <name>Ca(2+)</name>
        <dbReference type="ChEBI" id="CHEBI:29108"/>
        <label>5</label>
    </ligand>
</feature>
<feature type="binding site" evidence="3">
    <location>
        <position position="278"/>
    </location>
    <ligand>
        <name>Ca(2+)</name>
        <dbReference type="ChEBI" id="CHEBI:29108"/>
        <label>6</label>
    </ligand>
</feature>
<feature type="binding site" evidence="3">
    <location>
        <position position="280"/>
    </location>
    <ligand>
        <name>Ca(2+)</name>
        <dbReference type="ChEBI" id="CHEBI:29108"/>
        <label>6</label>
    </ligand>
</feature>
<feature type="binding site" evidence="3">
    <location>
        <position position="282"/>
    </location>
    <ligand>
        <name>Ca(2+)</name>
        <dbReference type="ChEBI" id="CHEBI:29108"/>
        <label>6</label>
    </ligand>
</feature>
<feature type="binding site" evidence="3">
    <location>
        <position position="284"/>
    </location>
    <ligand>
        <name>Ca(2+)</name>
        <dbReference type="ChEBI" id="CHEBI:29108"/>
        <label>6</label>
    </ligand>
</feature>
<feature type="binding site" evidence="3">
    <location>
        <position position="289"/>
    </location>
    <ligand>
        <name>Ca(2+)</name>
        <dbReference type="ChEBI" id="CHEBI:29108"/>
        <label>6</label>
    </ligand>
</feature>
<evidence type="ECO:0000250" key="1"/>
<evidence type="ECO:0000250" key="2">
    <source>
        <dbReference type="UniProtKB" id="O43852"/>
    </source>
</evidence>
<evidence type="ECO:0000255" key="3">
    <source>
        <dbReference type="PROSITE-ProRule" id="PRU00448"/>
    </source>
</evidence>
<evidence type="ECO:0000256" key="4">
    <source>
        <dbReference type="SAM" id="MobiDB-lite"/>
    </source>
</evidence>
<evidence type="ECO:0000305" key="5"/>
<name>CALUB_DANRE</name>
<accession>Q7SXV9</accession>